<sequence length="236" mass="25889">MGVEGCTKCIKYLLFVFNFVFWLAGGVILGVALWLRHDPQTTTLLYLELGDKPAPSTFYVGIYILIAVGAVMMFVGFLGCYGAIQESQCLLGTFFTCLVILFACEVAAGIWGFVNKDQIAKDVKQFYDQALQQAVMDDDANNAKAVVKTFHETLNCCGSNTLTTLTTAVLRNSLCPSSSNSFTQLLKEDCHQKIDELFSGKLYLIGIAAIVVAVIMIFEMILSMVLCCGIRNSSVY</sequence>
<organism>
    <name type="scientific">Rattus norvegicus</name>
    <name type="common">Rat</name>
    <dbReference type="NCBI Taxonomy" id="10116"/>
    <lineage>
        <taxon>Eukaryota</taxon>
        <taxon>Metazoa</taxon>
        <taxon>Chordata</taxon>
        <taxon>Craniata</taxon>
        <taxon>Vertebrata</taxon>
        <taxon>Euteleostomi</taxon>
        <taxon>Mammalia</taxon>
        <taxon>Eutheria</taxon>
        <taxon>Euarchontoglires</taxon>
        <taxon>Glires</taxon>
        <taxon>Rodentia</taxon>
        <taxon>Myomorpha</taxon>
        <taxon>Muroidea</taxon>
        <taxon>Muridae</taxon>
        <taxon>Murinae</taxon>
        <taxon>Rattus</taxon>
    </lineage>
</organism>
<reference key="1">
    <citation type="journal article" date="1996" name="J. Neurosci.">
        <title>Astrocyte growth, reactivity, and the target of the antiproliferative antibody, TAPA.</title>
        <authorList>
            <person name="Geisert E.E. Jr."/>
            <person name="Yang L."/>
            <person name="Irwin M.H."/>
        </authorList>
    </citation>
    <scope>NUCLEOTIDE SEQUENCE [MRNA]</scope>
    <source>
        <strain>Sprague-Dawley</strain>
        <tissue>Brain cortex</tissue>
    </source>
</reference>
<reference key="2">
    <citation type="submission" date="2007-09" db="UniProtKB">
        <authorList>
            <person name="Lubec G."/>
            <person name="Kang S.U."/>
            <person name="Lubec S."/>
        </authorList>
    </citation>
    <scope>PROTEIN SEQUENCE OF 125-144; 172-187 AND 194-201</scope>
    <scope>IDENTIFICATION BY MASS SPECTROMETRY</scope>
    <source>
        <strain>Sprague-Dawley</strain>
        <tissue>Brain</tissue>
    </source>
</reference>
<gene>
    <name type="primary">Cd81</name>
    <name type="synonym">Tapa1</name>
</gene>
<feature type="chain" id="PRO_0000219224" description="CD81 antigen">
    <location>
        <begin position="1"/>
        <end position="236"/>
    </location>
</feature>
<feature type="topological domain" description="Cytoplasmic" evidence="4">
    <location>
        <begin position="1"/>
        <end position="12"/>
    </location>
</feature>
<feature type="transmembrane region" description="Helical" evidence="2">
    <location>
        <begin position="13"/>
        <end position="33"/>
    </location>
</feature>
<feature type="topological domain" description="Extracellular" evidence="4">
    <location>
        <begin position="34"/>
        <end position="63"/>
    </location>
</feature>
<feature type="transmembrane region" description="Helical" evidence="2">
    <location>
        <begin position="64"/>
        <end position="84"/>
    </location>
</feature>
<feature type="topological domain" description="Cytoplasmic" evidence="4">
    <location>
        <begin position="85"/>
        <end position="89"/>
    </location>
</feature>
<feature type="transmembrane region" description="Helical" evidence="2">
    <location>
        <begin position="90"/>
        <end position="112"/>
    </location>
</feature>
<feature type="topological domain" description="Extracellular" evidence="4">
    <location>
        <begin position="113"/>
        <end position="201"/>
    </location>
</feature>
<feature type="transmembrane region" description="Helical" evidence="2">
    <location>
        <begin position="202"/>
        <end position="224"/>
    </location>
</feature>
<feature type="topological domain" description="Cytoplasmic" evidence="4">
    <location>
        <begin position="225"/>
        <end position="236"/>
    </location>
</feature>
<feature type="binding site" evidence="2">
    <location>
        <position position="219"/>
    </location>
    <ligand>
        <name>cholesterol</name>
        <dbReference type="ChEBI" id="CHEBI:16113"/>
    </ligand>
</feature>
<feature type="site" description="Important for interaction with integrin" evidence="2">
    <location>
        <position position="116"/>
    </location>
</feature>
<feature type="site" description="Important for interaction with integrin" evidence="2">
    <location>
        <position position="144"/>
    </location>
</feature>
<feature type="site" description="Important for interaction with integrin" evidence="2">
    <location>
        <position position="148"/>
    </location>
</feature>
<feature type="disulfide bond" evidence="2">
    <location>
        <begin position="156"/>
        <end position="190"/>
    </location>
</feature>
<feature type="disulfide bond" evidence="2">
    <location>
        <begin position="157"/>
        <end position="175"/>
    </location>
</feature>
<comment type="function">
    <text evidence="1 2">Structural component of specialized membrane microdomains known as tetraspanin-enriched microdomains (TERMs), which act as platforms for receptor clustering and signaling. Essential for trafficking and compartmentalization of CD19 receptor on the surface of activated B cells. Upon initial encounter with microbial pathogens, enables the assembly of CD19-CR2/CD21 and B cell receptor (BCR) complexes at signaling TERMs, lowering the threshold dose of antigen required to trigger B cell clonal expansion and antibody production. In T cells, facilitates the localization of CD247/CD3 zeta at antigen-induced synapses with B cells, providing for costimulation and polarization toward T helper type 2 phenotype. Present in MHC class II compartments, may also play a role in antigen presentation (By similarity). Can act both as positive and negative regulator of homotypic or heterotypic cell-cell fusion processes. Positively regulates sperm-egg fusion and may be involved in acrosome reaction. In myoblasts, associates with CD9 and PTGFRN and inhibits myotube fusion during muscle regeneration (By similarity). In macrophages, associates with CD9 and beta-1 and beta-2 integrins, and prevents macrophage fusion into multinucleated giant cells specialized in ingesting complement-opsonized large particles (By similarity). Also prevents the fusion of mononuclear cell progenitors into osteoclasts in charge of bone resorption (By similarity). May regulate the compartmentalization of enzymatic activities. In T cells, defines the subcellular localization of dNTPase SAMHD1 and permits its degradation by the proteasome, thereby controlling intracellular dNTP levels (By similarity). Also involved in cell adhesion and motility. Positively regulates integrin-mediated adhesion of macrophages, particularly relevant for the inflammatory response in the lung (By similarity).</text>
</comment>
<comment type="subunit">
    <text evidence="1 2">Homodimer. Part of a complex composed of CD19, CR2/CD21, CD81 and IFITM1/CD225 in the membrane of mature B cells. Interacts (via the second extracellular domain) with CD19; this interaction is initiated early during biosynthesis in the ER and enables trafficking of only properly folded CD19. Part of a complex that includes MHC class II/HLA-DR molecules and IFITM1. Interacts with IFITM1 (By similarity). Interacts with IFITM2 and IFITM3 (By similarity). Part of integrin-tetraspanin complex composed of CD9, CD81, beta-1 and beta-2 integrins in the membrane of monocyte/macrophages. Interacts (via the second extracellular domain) with integrin ITGAV:ITGB3. Interacts with CD247/CD3 zeta, ICAM1 and CD9 at the immune synapse on T cell membrane (By similarity). Part of a GPCR-tetraspanin complex consisting at least of ADGRG1, CD81, possibly CD9, and GNA11 in which CD81 enhances the association of ADGRG1 with GNA11. Part of a complex composed of CD9, CD81, PTGFRN and IGSF8 (By similarity). Interacts directly with IGSF8. Interacts with CD53 and SCIMP. Interacts with SAMHD1 (via its C-terminus) (By similarity). Interacts with glypican GPC3 and with the transcriptional repressor HHEX; binding to GPC3 decreases the availability of free CD81 for binding to HHEX, resulting in nuclear translocation of HHEX and transcriptional repression (By similarity). Interacts with CLDN1. Interacts with CLDN6 and CLDN9 (By similarity).</text>
</comment>
<comment type="subcellular location">
    <subcellularLocation>
        <location evidence="1">Cell membrane</location>
        <topology evidence="3">Multi-pass membrane protein</topology>
    </subcellularLocation>
    <subcellularLocation>
        <location evidence="2">Basolateral cell membrane</location>
        <topology evidence="3">Multi-pass membrane protein</topology>
    </subcellularLocation>
    <text evidence="2">Associates with CLDN1 and the CLDN1-CD81 complex localizes to the basolateral cell membrane.</text>
</comment>
<comment type="domain">
    <text evidence="2">Binds cholesterol in a cavity lined by the transmembrane spans.</text>
</comment>
<comment type="PTM">
    <text evidence="4">Not glycosylated.</text>
</comment>
<comment type="PTM">
    <text evidence="2">Likely constitutively palmitoylated at low levels. Protein palmitoylation is up-regulated upon coligation of BCR and CD9-C2R-CD81 complexes in lipid rafts.</text>
</comment>
<comment type="similarity">
    <text evidence="4">Belongs to the tetraspanin (TM4SF) family.</text>
</comment>
<keyword id="KW-1064">Adaptive immunity</keyword>
<keyword id="KW-1003">Cell membrane</keyword>
<keyword id="KW-0903">Direct protein sequencing</keyword>
<keyword id="KW-1015">Disulfide bond</keyword>
<keyword id="KW-0391">Immunity</keyword>
<keyword id="KW-0446">Lipid-binding</keyword>
<keyword id="KW-0472">Membrane</keyword>
<keyword id="KW-1185">Reference proteome</keyword>
<keyword id="KW-0812">Transmembrane</keyword>
<keyword id="KW-1133">Transmembrane helix</keyword>
<evidence type="ECO:0000250" key="1">
    <source>
        <dbReference type="UniProtKB" id="P35762"/>
    </source>
</evidence>
<evidence type="ECO:0000250" key="2">
    <source>
        <dbReference type="UniProtKB" id="P60033"/>
    </source>
</evidence>
<evidence type="ECO:0000255" key="3"/>
<evidence type="ECO:0000305" key="4"/>
<name>CD81_RAT</name>
<proteinExistence type="evidence at protein level"/>
<accession>Q62745</accession>
<dbReference type="EMBL" id="U19894">
    <property type="protein sequence ID" value="AAC53103.1"/>
    <property type="molecule type" value="mRNA"/>
</dbReference>
<dbReference type="SMR" id="Q62745"/>
<dbReference type="BioGRID" id="247650">
    <property type="interactions" value="1"/>
</dbReference>
<dbReference type="FunCoup" id="Q62745">
    <property type="interactions" value="294"/>
</dbReference>
<dbReference type="STRING" id="10116.ENSRNOP00000027760"/>
<dbReference type="iPTMnet" id="Q62745"/>
<dbReference type="PhosphoSitePlus" id="Q62745"/>
<dbReference type="SwissPalm" id="Q62745"/>
<dbReference type="PaxDb" id="10116-ENSRNOP00000027760"/>
<dbReference type="UCSC" id="RGD:2315">
    <property type="organism name" value="rat"/>
</dbReference>
<dbReference type="AGR" id="RGD:2315"/>
<dbReference type="RGD" id="2315">
    <property type="gene designation" value="Cd81"/>
</dbReference>
<dbReference type="eggNOG" id="KOG3882">
    <property type="taxonomic scope" value="Eukaryota"/>
</dbReference>
<dbReference type="InParanoid" id="Q62745"/>
<dbReference type="PhylomeDB" id="Q62745"/>
<dbReference type="Reactome" id="R-RNO-198933">
    <property type="pathway name" value="Immunoregulatory interactions between a Lymphoid and a non-Lymphoid cell"/>
</dbReference>
<dbReference type="Reactome" id="R-RNO-977606">
    <property type="pathway name" value="Regulation of Complement cascade"/>
</dbReference>
<dbReference type="PRO" id="PR:Q62745"/>
<dbReference type="Proteomes" id="UP000002494">
    <property type="component" value="Unplaced"/>
</dbReference>
<dbReference type="GO" id="GO:0016324">
    <property type="term" value="C:apical plasma membrane"/>
    <property type="evidence" value="ECO:0000314"/>
    <property type="project" value="RGD"/>
</dbReference>
<dbReference type="GO" id="GO:0009925">
    <property type="term" value="C:basal plasma membrane"/>
    <property type="evidence" value="ECO:0000266"/>
    <property type="project" value="RGD"/>
</dbReference>
<dbReference type="GO" id="GO:0016323">
    <property type="term" value="C:basolateral plasma membrane"/>
    <property type="evidence" value="ECO:0000266"/>
    <property type="project" value="RGD"/>
</dbReference>
<dbReference type="GO" id="GO:0070062">
    <property type="term" value="C:extracellular exosome"/>
    <property type="evidence" value="ECO:0000266"/>
    <property type="project" value="RGD"/>
</dbReference>
<dbReference type="GO" id="GO:0001772">
    <property type="term" value="C:immunological synapse"/>
    <property type="evidence" value="ECO:0000250"/>
    <property type="project" value="UniProtKB"/>
</dbReference>
<dbReference type="GO" id="GO:0016020">
    <property type="term" value="C:membrane"/>
    <property type="evidence" value="ECO:0000266"/>
    <property type="project" value="RGD"/>
</dbReference>
<dbReference type="GO" id="GO:0005886">
    <property type="term" value="C:plasma membrane"/>
    <property type="evidence" value="ECO:0000250"/>
    <property type="project" value="UniProtKB"/>
</dbReference>
<dbReference type="GO" id="GO:0097197">
    <property type="term" value="C:tetraspanin-enriched microdomain"/>
    <property type="evidence" value="ECO:0000250"/>
    <property type="project" value="UniProtKB"/>
</dbReference>
<dbReference type="GO" id="GO:0031982">
    <property type="term" value="C:vesicle"/>
    <property type="evidence" value="ECO:0000266"/>
    <property type="project" value="RGD"/>
</dbReference>
<dbReference type="GO" id="GO:0015485">
    <property type="term" value="F:cholesterol binding"/>
    <property type="evidence" value="ECO:0000250"/>
    <property type="project" value="UniProtKB"/>
</dbReference>
<dbReference type="GO" id="GO:0005178">
    <property type="term" value="F:integrin binding"/>
    <property type="evidence" value="ECO:0000250"/>
    <property type="project" value="UniProtKB"/>
</dbReference>
<dbReference type="GO" id="GO:0042289">
    <property type="term" value="F:MHC class II protein binding"/>
    <property type="evidence" value="ECO:0000266"/>
    <property type="project" value="RGD"/>
</dbReference>
<dbReference type="GO" id="GO:1990459">
    <property type="term" value="F:transferrin receptor binding"/>
    <property type="evidence" value="ECO:0000266"/>
    <property type="project" value="RGD"/>
</dbReference>
<dbReference type="GO" id="GO:0001618">
    <property type="term" value="F:virus receptor activity"/>
    <property type="evidence" value="ECO:0000266"/>
    <property type="project" value="RGD"/>
</dbReference>
<dbReference type="GO" id="GO:0035783">
    <property type="term" value="P:CD4-positive, alpha-beta T cell costimulation"/>
    <property type="evidence" value="ECO:0000250"/>
    <property type="project" value="UniProtKB"/>
</dbReference>
<dbReference type="GO" id="GO:0071404">
    <property type="term" value="P:cellular response to low-density lipoprotein particle stimulus"/>
    <property type="evidence" value="ECO:0000250"/>
    <property type="project" value="UniProtKB"/>
</dbReference>
<dbReference type="GO" id="GO:0002455">
    <property type="term" value="P:humoral immune response mediated by circulating immunoglobulin"/>
    <property type="evidence" value="ECO:0000250"/>
    <property type="project" value="UniProtKB"/>
</dbReference>
<dbReference type="GO" id="GO:0001771">
    <property type="term" value="P:immunological synapse formation"/>
    <property type="evidence" value="ECO:0000250"/>
    <property type="project" value="UniProtKB"/>
</dbReference>
<dbReference type="GO" id="GO:0034238">
    <property type="term" value="P:macrophage fusion"/>
    <property type="evidence" value="ECO:0000250"/>
    <property type="project" value="UniProtKB"/>
</dbReference>
<dbReference type="GO" id="GO:0014905">
    <property type="term" value="P:myoblast fusion involved in skeletal muscle regeneration"/>
    <property type="evidence" value="ECO:0000250"/>
    <property type="project" value="UniProtKB"/>
</dbReference>
<dbReference type="GO" id="GO:0072675">
    <property type="term" value="P:osteoclast fusion"/>
    <property type="evidence" value="ECO:0000250"/>
    <property type="project" value="UniProtKB"/>
</dbReference>
<dbReference type="GO" id="GO:1905676">
    <property type="term" value="P:positive regulation of adaptive immune memory response"/>
    <property type="evidence" value="ECO:0000266"/>
    <property type="project" value="RGD"/>
</dbReference>
<dbReference type="GO" id="GO:0050871">
    <property type="term" value="P:positive regulation of B cell activation"/>
    <property type="evidence" value="ECO:0000250"/>
    <property type="project" value="UniProtKB"/>
</dbReference>
<dbReference type="GO" id="GO:0030890">
    <property type="term" value="P:positive regulation of B cell proliferation"/>
    <property type="evidence" value="ECO:0000266"/>
    <property type="project" value="RGD"/>
</dbReference>
<dbReference type="GO" id="GO:0050861">
    <property type="term" value="P:positive regulation of B cell receptor signaling pathway"/>
    <property type="evidence" value="ECO:0000250"/>
    <property type="project" value="UniProtKB"/>
</dbReference>
<dbReference type="GO" id="GO:2000563">
    <property type="term" value="P:positive regulation of CD4-positive, alpha-beta T cell proliferation"/>
    <property type="evidence" value="ECO:0000250"/>
    <property type="project" value="UniProtKB"/>
</dbReference>
<dbReference type="GO" id="GO:0002863">
    <property type="term" value="P:positive regulation of inflammatory response to antigenic stimulus"/>
    <property type="evidence" value="ECO:0000250"/>
    <property type="project" value="UniProtKB"/>
</dbReference>
<dbReference type="GO" id="GO:0043410">
    <property type="term" value="P:positive regulation of MAPK cascade"/>
    <property type="evidence" value="ECO:0000250"/>
    <property type="project" value="UniProtKB"/>
</dbReference>
<dbReference type="GO" id="GO:1904352">
    <property type="term" value="P:positive regulation of protein catabolic process in the vacuole"/>
    <property type="evidence" value="ECO:0000266"/>
    <property type="project" value="RGD"/>
</dbReference>
<dbReference type="GO" id="GO:0070863">
    <property type="term" value="P:positive regulation of protein exit from endoplasmic reticulum"/>
    <property type="evidence" value="ECO:0000250"/>
    <property type="project" value="UniProtKB"/>
</dbReference>
<dbReference type="GO" id="GO:1903911">
    <property type="term" value="P:positive regulation of receptor clustering"/>
    <property type="evidence" value="ECO:0000250"/>
    <property type="project" value="UniProtKB"/>
</dbReference>
<dbReference type="GO" id="GO:2001190">
    <property type="term" value="P:positive regulation of T cell activation via T cell receptor contact with antigen bound to MHC molecule on antigen presenting cell"/>
    <property type="evidence" value="ECO:0000250"/>
    <property type="project" value="UniProtKB"/>
</dbReference>
<dbReference type="GO" id="GO:0050862">
    <property type="term" value="P:positive regulation of T cell receptor signaling pathway"/>
    <property type="evidence" value="ECO:0000250"/>
    <property type="project" value="UniProtKB"/>
</dbReference>
<dbReference type="GO" id="GO:2000553">
    <property type="term" value="P:positive regulation of T-helper 2 cell cytokine production"/>
    <property type="evidence" value="ECO:0000250"/>
    <property type="project" value="UniProtKB"/>
</dbReference>
<dbReference type="GO" id="GO:0045944">
    <property type="term" value="P:positive regulation of transcription by RNA polymerase II"/>
    <property type="evidence" value="ECO:0000266"/>
    <property type="project" value="RGD"/>
</dbReference>
<dbReference type="GO" id="GO:0061462">
    <property type="term" value="P:protein localization to lysosome"/>
    <property type="evidence" value="ECO:0000266"/>
    <property type="project" value="RGD"/>
</dbReference>
<dbReference type="GO" id="GO:0072659">
    <property type="term" value="P:protein localization to plasma membrane"/>
    <property type="evidence" value="ECO:0000250"/>
    <property type="project" value="UniProtKB"/>
</dbReference>
<dbReference type="GO" id="GO:0031623">
    <property type="term" value="P:receptor internalization"/>
    <property type="evidence" value="ECO:0000250"/>
    <property type="project" value="UniProtKB"/>
</dbReference>
<dbReference type="GO" id="GO:2000145">
    <property type="term" value="P:regulation of cell motility"/>
    <property type="evidence" value="ECO:0000266"/>
    <property type="project" value="RGD"/>
</dbReference>
<dbReference type="GO" id="GO:0042127">
    <property type="term" value="P:regulation of cell population proliferation"/>
    <property type="evidence" value="ECO:0000314"/>
    <property type="project" value="RGD"/>
</dbReference>
<dbReference type="GO" id="GO:0040008">
    <property type="term" value="P:regulation of growth"/>
    <property type="evidence" value="ECO:0000270"/>
    <property type="project" value="RGD"/>
</dbReference>
<dbReference type="GO" id="GO:1905521">
    <property type="term" value="P:regulation of macrophage migration"/>
    <property type="evidence" value="ECO:0000250"/>
    <property type="project" value="UniProtKB"/>
</dbReference>
<dbReference type="GO" id="GO:0031647">
    <property type="term" value="P:regulation of protein stability"/>
    <property type="evidence" value="ECO:0000266"/>
    <property type="project" value="RGD"/>
</dbReference>
<dbReference type="CDD" id="cd03151">
    <property type="entry name" value="CD81_like_LEL"/>
    <property type="match status" value="1"/>
</dbReference>
<dbReference type="FunFam" id="1.10.1450.10:FF:000010">
    <property type="entry name" value="Tetraspanin"/>
    <property type="match status" value="1"/>
</dbReference>
<dbReference type="Gene3D" id="1.10.1450.10">
    <property type="entry name" value="Tetraspanin"/>
    <property type="match status" value="1"/>
</dbReference>
<dbReference type="InterPro" id="IPR018499">
    <property type="entry name" value="Tetraspanin/Peripherin"/>
</dbReference>
<dbReference type="InterPro" id="IPR000301">
    <property type="entry name" value="Tetraspanin_animals"/>
</dbReference>
<dbReference type="InterPro" id="IPR018503">
    <property type="entry name" value="Tetraspanin_CS"/>
</dbReference>
<dbReference type="InterPro" id="IPR008952">
    <property type="entry name" value="Tetraspanin_EC2_sf"/>
</dbReference>
<dbReference type="PANTHER" id="PTHR19282:SF214">
    <property type="entry name" value="CD81 ANTIGEN"/>
    <property type="match status" value="1"/>
</dbReference>
<dbReference type="PANTHER" id="PTHR19282">
    <property type="entry name" value="TETRASPANIN"/>
    <property type="match status" value="1"/>
</dbReference>
<dbReference type="Pfam" id="PF00335">
    <property type="entry name" value="Tetraspanin"/>
    <property type="match status" value="1"/>
</dbReference>
<dbReference type="PIRSF" id="PIRSF002419">
    <property type="entry name" value="Tetraspanin"/>
    <property type="match status" value="1"/>
</dbReference>
<dbReference type="PRINTS" id="PR00259">
    <property type="entry name" value="TMFOUR"/>
</dbReference>
<dbReference type="SUPFAM" id="SSF48652">
    <property type="entry name" value="Tetraspanin"/>
    <property type="match status" value="1"/>
</dbReference>
<dbReference type="PROSITE" id="PS00421">
    <property type="entry name" value="TM4_1"/>
    <property type="match status" value="1"/>
</dbReference>
<protein>
    <recommendedName>
        <fullName>CD81 antigen</fullName>
    </recommendedName>
    <alternativeName>
        <fullName>26 kDa cell surface protein TAPA-1</fullName>
    </alternativeName>
    <alternativeName>
        <fullName>Target of the antiproliferative antibody 1</fullName>
    </alternativeName>
    <cdAntigenName>CD81</cdAntigenName>
</protein>